<accession>Q0HTW9</accession>
<reference key="1">
    <citation type="submission" date="2006-08" db="EMBL/GenBank/DDBJ databases">
        <title>Complete sequence of chromosome 1 of Shewanella sp. MR-7.</title>
        <authorList>
            <person name="Copeland A."/>
            <person name="Lucas S."/>
            <person name="Lapidus A."/>
            <person name="Barry K."/>
            <person name="Detter J.C."/>
            <person name="Glavina del Rio T."/>
            <person name="Hammon N."/>
            <person name="Israni S."/>
            <person name="Dalin E."/>
            <person name="Tice H."/>
            <person name="Pitluck S."/>
            <person name="Kiss H."/>
            <person name="Brettin T."/>
            <person name="Bruce D."/>
            <person name="Han C."/>
            <person name="Tapia R."/>
            <person name="Gilna P."/>
            <person name="Schmutz J."/>
            <person name="Larimer F."/>
            <person name="Land M."/>
            <person name="Hauser L."/>
            <person name="Kyrpides N."/>
            <person name="Mikhailova N."/>
            <person name="Nealson K."/>
            <person name="Konstantinidis K."/>
            <person name="Klappenbach J."/>
            <person name="Tiedje J."/>
            <person name="Richardson P."/>
        </authorList>
    </citation>
    <scope>NUCLEOTIDE SEQUENCE [LARGE SCALE GENOMIC DNA]</scope>
    <source>
        <strain>MR-7</strain>
    </source>
</reference>
<dbReference type="EC" id="2.4.2.9" evidence="1"/>
<dbReference type="EMBL" id="CP000444">
    <property type="protein sequence ID" value="ABI43436.1"/>
    <property type="molecule type" value="Genomic_DNA"/>
</dbReference>
<dbReference type="SMR" id="Q0HTW9"/>
<dbReference type="KEGG" id="shm:Shewmr7_2451"/>
<dbReference type="HOGENOM" id="CLU_067096_2_2_6"/>
<dbReference type="UniPathway" id="UPA00574">
    <property type="reaction ID" value="UER00636"/>
</dbReference>
<dbReference type="GO" id="GO:0005525">
    <property type="term" value="F:GTP binding"/>
    <property type="evidence" value="ECO:0007669"/>
    <property type="project" value="UniProtKB-KW"/>
</dbReference>
<dbReference type="GO" id="GO:0000287">
    <property type="term" value="F:magnesium ion binding"/>
    <property type="evidence" value="ECO:0007669"/>
    <property type="project" value="UniProtKB-UniRule"/>
</dbReference>
<dbReference type="GO" id="GO:0004845">
    <property type="term" value="F:uracil phosphoribosyltransferase activity"/>
    <property type="evidence" value="ECO:0007669"/>
    <property type="project" value="UniProtKB-UniRule"/>
</dbReference>
<dbReference type="GO" id="GO:0044206">
    <property type="term" value="P:UMP salvage"/>
    <property type="evidence" value="ECO:0007669"/>
    <property type="project" value="UniProtKB-UniRule"/>
</dbReference>
<dbReference type="GO" id="GO:0006223">
    <property type="term" value="P:uracil salvage"/>
    <property type="evidence" value="ECO:0007669"/>
    <property type="project" value="InterPro"/>
</dbReference>
<dbReference type="CDD" id="cd06223">
    <property type="entry name" value="PRTases_typeI"/>
    <property type="match status" value="1"/>
</dbReference>
<dbReference type="FunFam" id="3.40.50.2020:FF:000003">
    <property type="entry name" value="Uracil phosphoribosyltransferase"/>
    <property type="match status" value="1"/>
</dbReference>
<dbReference type="Gene3D" id="3.40.50.2020">
    <property type="match status" value="1"/>
</dbReference>
<dbReference type="HAMAP" id="MF_01218_B">
    <property type="entry name" value="Upp_B"/>
    <property type="match status" value="1"/>
</dbReference>
<dbReference type="InterPro" id="IPR000836">
    <property type="entry name" value="PRibTrfase_dom"/>
</dbReference>
<dbReference type="InterPro" id="IPR029057">
    <property type="entry name" value="PRTase-like"/>
</dbReference>
<dbReference type="InterPro" id="IPR034332">
    <property type="entry name" value="Upp_B"/>
</dbReference>
<dbReference type="InterPro" id="IPR050054">
    <property type="entry name" value="UPRTase/APRTase"/>
</dbReference>
<dbReference type="InterPro" id="IPR005765">
    <property type="entry name" value="Ura_phspho_trans"/>
</dbReference>
<dbReference type="NCBIfam" id="NF001097">
    <property type="entry name" value="PRK00129.1"/>
    <property type="match status" value="1"/>
</dbReference>
<dbReference type="NCBIfam" id="TIGR01091">
    <property type="entry name" value="upp"/>
    <property type="match status" value="1"/>
</dbReference>
<dbReference type="PANTHER" id="PTHR32315">
    <property type="entry name" value="ADENINE PHOSPHORIBOSYLTRANSFERASE"/>
    <property type="match status" value="1"/>
</dbReference>
<dbReference type="PANTHER" id="PTHR32315:SF4">
    <property type="entry name" value="URACIL PHOSPHORIBOSYLTRANSFERASE, CHLOROPLASTIC"/>
    <property type="match status" value="1"/>
</dbReference>
<dbReference type="Pfam" id="PF14681">
    <property type="entry name" value="UPRTase"/>
    <property type="match status" value="1"/>
</dbReference>
<dbReference type="SUPFAM" id="SSF53271">
    <property type="entry name" value="PRTase-like"/>
    <property type="match status" value="1"/>
</dbReference>
<keyword id="KW-0021">Allosteric enzyme</keyword>
<keyword id="KW-0328">Glycosyltransferase</keyword>
<keyword id="KW-0342">GTP-binding</keyword>
<keyword id="KW-0460">Magnesium</keyword>
<keyword id="KW-0547">Nucleotide-binding</keyword>
<keyword id="KW-0808">Transferase</keyword>
<proteinExistence type="inferred from homology"/>
<sequence>MKVVEVKHPLVRHKIGLMREGDISTKRFRELAAEVGSLLTYEATADFETETVTIEGWNGPVDVDQIKGKKVTVVPILRAGLGMMDGVLEHIPSARISVVGIYRDEETLEPVPYFEKLASDMNERIALIVDPMLATGGSMIATIDLLKKRGCTSIKALVLVAAPEGIKALEAAHPDVELYTAAIDRCLNEKGYILPGLGDAGDKIFGTK</sequence>
<organism>
    <name type="scientific">Shewanella sp. (strain MR-7)</name>
    <dbReference type="NCBI Taxonomy" id="60481"/>
    <lineage>
        <taxon>Bacteria</taxon>
        <taxon>Pseudomonadati</taxon>
        <taxon>Pseudomonadota</taxon>
        <taxon>Gammaproteobacteria</taxon>
        <taxon>Alteromonadales</taxon>
        <taxon>Shewanellaceae</taxon>
        <taxon>Shewanella</taxon>
    </lineage>
</organism>
<feature type="chain" id="PRO_1000053785" description="Uracil phosphoribosyltransferase">
    <location>
        <begin position="1"/>
        <end position="208"/>
    </location>
</feature>
<feature type="binding site" evidence="1">
    <location>
        <position position="78"/>
    </location>
    <ligand>
        <name>5-phospho-alpha-D-ribose 1-diphosphate</name>
        <dbReference type="ChEBI" id="CHEBI:58017"/>
    </ligand>
</feature>
<feature type="binding site" evidence="1">
    <location>
        <position position="103"/>
    </location>
    <ligand>
        <name>5-phospho-alpha-D-ribose 1-diphosphate</name>
        <dbReference type="ChEBI" id="CHEBI:58017"/>
    </ligand>
</feature>
<feature type="binding site" evidence="1">
    <location>
        <begin position="130"/>
        <end position="138"/>
    </location>
    <ligand>
        <name>5-phospho-alpha-D-ribose 1-diphosphate</name>
        <dbReference type="ChEBI" id="CHEBI:58017"/>
    </ligand>
</feature>
<feature type="binding site" evidence="1">
    <location>
        <position position="193"/>
    </location>
    <ligand>
        <name>uracil</name>
        <dbReference type="ChEBI" id="CHEBI:17568"/>
    </ligand>
</feature>
<feature type="binding site" evidence="1">
    <location>
        <begin position="198"/>
        <end position="200"/>
    </location>
    <ligand>
        <name>uracil</name>
        <dbReference type="ChEBI" id="CHEBI:17568"/>
    </ligand>
</feature>
<feature type="binding site" evidence="1">
    <location>
        <position position="199"/>
    </location>
    <ligand>
        <name>5-phospho-alpha-D-ribose 1-diphosphate</name>
        <dbReference type="ChEBI" id="CHEBI:58017"/>
    </ligand>
</feature>
<comment type="function">
    <text evidence="1">Catalyzes the conversion of uracil and 5-phospho-alpha-D-ribose 1-diphosphate (PRPP) to UMP and diphosphate.</text>
</comment>
<comment type="catalytic activity">
    <reaction evidence="1">
        <text>UMP + diphosphate = 5-phospho-alpha-D-ribose 1-diphosphate + uracil</text>
        <dbReference type="Rhea" id="RHEA:13017"/>
        <dbReference type="ChEBI" id="CHEBI:17568"/>
        <dbReference type="ChEBI" id="CHEBI:33019"/>
        <dbReference type="ChEBI" id="CHEBI:57865"/>
        <dbReference type="ChEBI" id="CHEBI:58017"/>
        <dbReference type="EC" id="2.4.2.9"/>
    </reaction>
</comment>
<comment type="cofactor">
    <cofactor evidence="1">
        <name>Mg(2+)</name>
        <dbReference type="ChEBI" id="CHEBI:18420"/>
    </cofactor>
    <text evidence="1">Binds 1 Mg(2+) ion per subunit. The magnesium is bound as Mg-PRPP.</text>
</comment>
<comment type="activity regulation">
    <text evidence="1">Allosterically activated by GTP.</text>
</comment>
<comment type="pathway">
    <text evidence="1">Pyrimidine metabolism; UMP biosynthesis via salvage pathway; UMP from uracil: step 1/1.</text>
</comment>
<comment type="similarity">
    <text evidence="1">Belongs to the UPRTase family.</text>
</comment>
<name>UPP_SHESR</name>
<protein>
    <recommendedName>
        <fullName evidence="1">Uracil phosphoribosyltransferase</fullName>
        <ecNumber evidence="1">2.4.2.9</ecNumber>
    </recommendedName>
    <alternativeName>
        <fullName evidence="1">UMP pyrophosphorylase</fullName>
    </alternativeName>
    <alternativeName>
        <fullName evidence="1">UPRTase</fullName>
    </alternativeName>
</protein>
<gene>
    <name evidence="1" type="primary">upp</name>
    <name type="ordered locus">Shewmr7_2451</name>
</gene>
<evidence type="ECO:0000255" key="1">
    <source>
        <dbReference type="HAMAP-Rule" id="MF_01218"/>
    </source>
</evidence>